<proteinExistence type="inferred from homology"/>
<feature type="chain" id="PRO_1000184849" description="Agmatinase">
    <location>
        <begin position="1"/>
        <end position="306"/>
    </location>
</feature>
<feature type="binding site" evidence="1">
    <location>
        <position position="126"/>
    </location>
    <ligand>
        <name>Mn(2+)</name>
        <dbReference type="ChEBI" id="CHEBI:29035"/>
    </ligand>
</feature>
<feature type="binding site" evidence="1">
    <location>
        <position position="149"/>
    </location>
    <ligand>
        <name>Mn(2+)</name>
        <dbReference type="ChEBI" id="CHEBI:29035"/>
    </ligand>
</feature>
<feature type="binding site" evidence="1">
    <location>
        <position position="151"/>
    </location>
    <ligand>
        <name>Mn(2+)</name>
        <dbReference type="ChEBI" id="CHEBI:29035"/>
    </ligand>
</feature>
<feature type="binding site" evidence="1">
    <location>
        <position position="153"/>
    </location>
    <ligand>
        <name>Mn(2+)</name>
        <dbReference type="ChEBI" id="CHEBI:29035"/>
    </ligand>
</feature>
<feature type="binding site" evidence="1">
    <location>
        <position position="230"/>
    </location>
    <ligand>
        <name>Mn(2+)</name>
        <dbReference type="ChEBI" id="CHEBI:29035"/>
    </ligand>
</feature>
<feature type="binding site" evidence="1">
    <location>
        <position position="232"/>
    </location>
    <ligand>
        <name>Mn(2+)</name>
        <dbReference type="ChEBI" id="CHEBI:29035"/>
    </ligand>
</feature>
<gene>
    <name evidence="1" type="primary">speB</name>
    <name type="ordered locus">SPC_3141</name>
</gene>
<name>SPEB_SALPC</name>
<comment type="function">
    <text evidence="1">Catalyzes the formation of putrescine from agmatine.</text>
</comment>
<comment type="catalytic activity">
    <reaction evidence="1">
        <text>agmatine + H2O = urea + putrescine</text>
        <dbReference type="Rhea" id="RHEA:13929"/>
        <dbReference type="ChEBI" id="CHEBI:15377"/>
        <dbReference type="ChEBI" id="CHEBI:16199"/>
        <dbReference type="ChEBI" id="CHEBI:58145"/>
        <dbReference type="ChEBI" id="CHEBI:326268"/>
        <dbReference type="EC" id="3.5.3.11"/>
    </reaction>
</comment>
<comment type="cofactor">
    <cofactor evidence="1">
        <name>Mn(2+)</name>
        <dbReference type="ChEBI" id="CHEBI:29035"/>
    </cofactor>
</comment>
<comment type="pathway">
    <text evidence="1">Amine and polyamine biosynthesis; putrescine biosynthesis via agmatine pathway; putrescine from agmatine: step 1/1.</text>
</comment>
<comment type="similarity">
    <text evidence="1">Belongs to the arginase family. Agmatinase subfamily.</text>
</comment>
<dbReference type="EC" id="3.5.3.11" evidence="1"/>
<dbReference type="EMBL" id="CP000857">
    <property type="protein sequence ID" value="ACN47228.1"/>
    <property type="molecule type" value="Genomic_DNA"/>
</dbReference>
<dbReference type="RefSeq" id="WP_000105550.1">
    <property type="nucleotide sequence ID" value="NC_012125.1"/>
</dbReference>
<dbReference type="SMR" id="C0PY54"/>
<dbReference type="KEGG" id="sei:SPC_3141"/>
<dbReference type="HOGENOM" id="CLU_039478_0_0_6"/>
<dbReference type="UniPathway" id="UPA00534">
    <property type="reaction ID" value="UER00287"/>
</dbReference>
<dbReference type="Proteomes" id="UP000001599">
    <property type="component" value="Chromosome"/>
</dbReference>
<dbReference type="GO" id="GO:0008783">
    <property type="term" value="F:agmatinase activity"/>
    <property type="evidence" value="ECO:0007669"/>
    <property type="project" value="UniProtKB-UniRule"/>
</dbReference>
<dbReference type="GO" id="GO:0030145">
    <property type="term" value="F:manganese ion binding"/>
    <property type="evidence" value="ECO:0007669"/>
    <property type="project" value="InterPro"/>
</dbReference>
<dbReference type="GO" id="GO:0033389">
    <property type="term" value="P:putrescine biosynthetic process from arginine, via agmatine"/>
    <property type="evidence" value="ECO:0007669"/>
    <property type="project" value="TreeGrafter"/>
</dbReference>
<dbReference type="GO" id="GO:0008295">
    <property type="term" value="P:spermidine biosynthetic process"/>
    <property type="evidence" value="ECO:0007669"/>
    <property type="project" value="UniProtKB-UniRule"/>
</dbReference>
<dbReference type="CDD" id="cd11592">
    <property type="entry name" value="Agmatinase_PAH"/>
    <property type="match status" value="1"/>
</dbReference>
<dbReference type="FunFam" id="3.40.800.10:FF:000001">
    <property type="entry name" value="Agmatinase"/>
    <property type="match status" value="1"/>
</dbReference>
<dbReference type="Gene3D" id="3.40.800.10">
    <property type="entry name" value="Ureohydrolase domain"/>
    <property type="match status" value="1"/>
</dbReference>
<dbReference type="HAMAP" id="MF_01418">
    <property type="entry name" value="SpeB"/>
    <property type="match status" value="1"/>
</dbReference>
<dbReference type="InterPro" id="IPR023694">
    <property type="entry name" value="Agmatinase"/>
</dbReference>
<dbReference type="InterPro" id="IPR005925">
    <property type="entry name" value="Agmatinase-rel"/>
</dbReference>
<dbReference type="InterPro" id="IPR006035">
    <property type="entry name" value="Ureohydrolase"/>
</dbReference>
<dbReference type="InterPro" id="IPR023696">
    <property type="entry name" value="Ureohydrolase_dom_sf"/>
</dbReference>
<dbReference type="InterPro" id="IPR020855">
    <property type="entry name" value="Ureohydrolase_Mn_BS"/>
</dbReference>
<dbReference type="NCBIfam" id="TIGR01230">
    <property type="entry name" value="agmatinase"/>
    <property type="match status" value="1"/>
</dbReference>
<dbReference type="NCBIfam" id="NF002564">
    <property type="entry name" value="PRK02190.1"/>
    <property type="match status" value="1"/>
</dbReference>
<dbReference type="PANTHER" id="PTHR11358">
    <property type="entry name" value="ARGINASE/AGMATINASE"/>
    <property type="match status" value="1"/>
</dbReference>
<dbReference type="PANTHER" id="PTHR11358:SF26">
    <property type="entry name" value="GUANIDINO ACID HYDROLASE, MITOCHONDRIAL"/>
    <property type="match status" value="1"/>
</dbReference>
<dbReference type="Pfam" id="PF00491">
    <property type="entry name" value="Arginase"/>
    <property type="match status" value="1"/>
</dbReference>
<dbReference type="PIRSF" id="PIRSF036979">
    <property type="entry name" value="Arginase"/>
    <property type="match status" value="1"/>
</dbReference>
<dbReference type="SUPFAM" id="SSF52768">
    <property type="entry name" value="Arginase/deacetylase"/>
    <property type="match status" value="1"/>
</dbReference>
<dbReference type="PROSITE" id="PS01053">
    <property type="entry name" value="ARGINASE_1"/>
    <property type="match status" value="1"/>
</dbReference>
<dbReference type="PROSITE" id="PS51409">
    <property type="entry name" value="ARGINASE_2"/>
    <property type="match status" value="1"/>
</dbReference>
<accession>C0PY54</accession>
<organism>
    <name type="scientific">Salmonella paratyphi C (strain RKS4594)</name>
    <dbReference type="NCBI Taxonomy" id="476213"/>
    <lineage>
        <taxon>Bacteria</taxon>
        <taxon>Pseudomonadati</taxon>
        <taxon>Pseudomonadota</taxon>
        <taxon>Gammaproteobacteria</taxon>
        <taxon>Enterobacterales</taxon>
        <taxon>Enterobacteriaceae</taxon>
        <taxon>Salmonella</taxon>
    </lineage>
</organism>
<protein>
    <recommendedName>
        <fullName evidence="1">Agmatinase</fullName>
        <ecNumber evidence="1">3.5.3.11</ecNumber>
    </recommendedName>
    <alternativeName>
        <fullName evidence="1">Agmatine ureohydrolase</fullName>
        <shortName evidence="1">AUH</shortName>
    </alternativeName>
</protein>
<reference key="1">
    <citation type="journal article" date="2009" name="PLoS ONE">
        <title>Salmonella paratyphi C: genetic divergence from Salmonella choleraesuis and pathogenic convergence with Salmonella typhi.</title>
        <authorList>
            <person name="Liu W.-Q."/>
            <person name="Feng Y."/>
            <person name="Wang Y."/>
            <person name="Zou Q.-H."/>
            <person name="Chen F."/>
            <person name="Guo J.-T."/>
            <person name="Peng Y.-H."/>
            <person name="Jin Y."/>
            <person name="Li Y.-G."/>
            <person name="Hu S.-N."/>
            <person name="Johnston R.N."/>
            <person name="Liu G.-R."/>
            <person name="Liu S.-L."/>
        </authorList>
    </citation>
    <scope>NUCLEOTIDE SEQUENCE [LARGE SCALE GENOMIC DNA]</scope>
    <source>
        <strain>RKS4594</strain>
    </source>
</reference>
<keyword id="KW-0378">Hydrolase</keyword>
<keyword id="KW-0464">Manganese</keyword>
<keyword id="KW-0479">Metal-binding</keyword>
<keyword id="KW-0620">Polyamine biosynthesis</keyword>
<keyword id="KW-0661">Putrescine biosynthesis</keyword>
<keyword id="KW-0745">Spermidine biosynthesis</keyword>
<evidence type="ECO:0000255" key="1">
    <source>
        <dbReference type="HAMAP-Rule" id="MF_01418"/>
    </source>
</evidence>
<sequence>MSTLGHQYDNSLVSNAFGFLRLPMNFQPYDSDADWVITGVPFDMATSGRAGGRHGPAAIRQVSTNLAWEHHRFPWNFDMRERLNVVDCGDLVYAFGDAREMSEKLQAHAEKLLSAGKRMLSFGGDHFVTLPLLRAHAKHFGKMALVHFDAHTDTYANGCEFDHGTMFYTAPKEGLIDPHHSVQIGIRTEFDKDNGFTVLDACQVNDRGVDDILAQVKQIVGDMPVYLTFDIDCLDPAFAPGTGTPVIGGLTSDRAIKLVRGLKDLNIVGMDVVEVAPAYDQSEITALAAATLALEMLYIQAAKKGE</sequence>